<evidence type="ECO:0000255" key="1">
    <source>
        <dbReference type="HAMAP-Rule" id="MF_00107"/>
    </source>
</evidence>
<sequence>MRIGIGIDVHPFAEGRKLIVGGVDIPSPKGLEGHSDADVLLHAVSDALLGAAALGDIGLHFPNTSAEYKDIDSMILLKHVGRLLTKNGYRTVNVDAMLLLEAPKIAPYVADMRRNIARCLDIDTSLVSVKATTNEKLGYIGREEGAAAHAVCIIETL</sequence>
<accession>Q3B2H9</accession>
<gene>
    <name evidence="1" type="primary">ispF</name>
    <name type="ordered locus">Plut_1598</name>
</gene>
<keyword id="KW-0414">Isoprene biosynthesis</keyword>
<keyword id="KW-0456">Lyase</keyword>
<keyword id="KW-0479">Metal-binding</keyword>
<keyword id="KW-1185">Reference proteome</keyword>
<reference key="1">
    <citation type="submission" date="2005-08" db="EMBL/GenBank/DDBJ databases">
        <title>Complete sequence of Pelodictyon luteolum DSM 273.</title>
        <authorList>
            <consortium name="US DOE Joint Genome Institute"/>
            <person name="Copeland A."/>
            <person name="Lucas S."/>
            <person name="Lapidus A."/>
            <person name="Barry K."/>
            <person name="Detter J.C."/>
            <person name="Glavina T."/>
            <person name="Hammon N."/>
            <person name="Israni S."/>
            <person name="Pitluck S."/>
            <person name="Bryant D."/>
            <person name="Schmutz J."/>
            <person name="Larimer F."/>
            <person name="Land M."/>
            <person name="Kyrpides N."/>
            <person name="Ivanova N."/>
            <person name="Richardson P."/>
        </authorList>
    </citation>
    <scope>NUCLEOTIDE SEQUENCE [LARGE SCALE GENOMIC DNA]</scope>
    <source>
        <strain>DSM 273 / BCRC 81028 / 2530</strain>
    </source>
</reference>
<comment type="function">
    <text evidence="1">Involved in the biosynthesis of isopentenyl diphosphate (IPP) and dimethylallyl diphosphate (DMAPP), two major building blocks of isoprenoid compounds. Catalyzes the conversion of 4-diphosphocytidyl-2-C-methyl-D-erythritol 2-phosphate (CDP-ME2P) to 2-C-methyl-D-erythritol 2,4-cyclodiphosphate (ME-CPP) with a corresponding release of cytidine 5-monophosphate (CMP).</text>
</comment>
<comment type="catalytic activity">
    <reaction evidence="1">
        <text>4-CDP-2-C-methyl-D-erythritol 2-phosphate = 2-C-methyl-D-erythritol 2,4-cyclic diphosphate + CMP</text>
        <dbReference type="Rhea" id="RHEA:23864"/>
        <dbReference type="ChEBI" id="CHEBI:57919"/>
        <dbReference type="ChEBI" id="CHEBI:58483"/>
        <dbReference type="ChEBI" id="CHEBI:60377"/>
        <dbReference type="EC" id="4.6.1.12"/>
    </reaction>
</comment>
<comment type="cofactor">
    <cofactor evidence="1">
        <name>a divalent metal cation</name>
        <dbReference type="ChEBI" id="CHEBI:60240"/>
    </cofactor>
    <text evidence="1">Binds 1 divalent metal cation per subunit.</text>
</comment>
<comment type="pathway">
    <text evidence="1">Isoprenoid biosynthesis; isopentenyl diphosphate biosynthesis via DXP pathway; isopentenyl diphosphate from 1-deoxy-D-xylulose 5-phosphate: step 4/6.</text>
</comment>
<comment type="subunit">
    <text evidence="1">Homotrimer.</text>
</comment>
<comment type="similarity">
    <text evidence="1">Belongs to the IspF family.</text>
</comment>
<protein>
    <recommendedName>
        <fullName evidence="1">2-C-methyl-D-erythritol 2,4-cyclodiphosphate synthase</fullName>
        <shortName evidence="1">MECDP-synthase</shortName>
        <shortName evidence="1">MECPP-synthase</shortName>
        <shortName evidence="1">MECPS</shortName>
        <ecNumber evidence="1">4.6.1.12</ecNumber>
    </recommendedName>
</protein>
<name>ISPF_CHLL3</name>
<feature type="chain" id="PRO_0000237739" description="2-C-methyl-D-erythritol 2,4-cyclodiphosphate synthase">
    <location>
        <begin position="1"/>
        <end position="157"/>
    </location>
</feature>
<feature type="binding site" evidence="1">
    <location>
        <begin position="8"/>
        <end position="10"/>
    </location>
    <ligand>
        <name>4-CDP-2-C-methyl-D-erythritol 2-phosphate</name>
        <dbReference type="ChEBI" id="CHEBI:57919"/>
    </ligand>
</feature>
<feature type="binding site" evidence="1">
    <location>
        <position position="8"/>
    </location>
    <ligand>
        <name>a divalent metal cation</name>
        <dbReference type="ChEBI" id="CHEBI:60240"/>
    </ligand>
</feature>
<feature type="binding site" evidence="1">
    <location>
        <position position="10"/>
    </location>
    <ligand>
        <name>a divalent metal cation</name>
        <dbReference type="ChEBI" id="CHEBI:60240"/>
    </ligand>
</feature>
<feature type="binding site" evidence="1">
    <location>
        <begin position="34"/>
        <end position="35"/>
    </location>
    <ligand>
        <name>4-CDP-2-C-methyl-D-erythritol 2-phosphate</name>
        <dbReference type="ChEBI" id="CHEBI:57919"/>
    </ligand>
</feature>
<feature type="binding site" evidence="1">
    <location>
        <position position="42"/>
    </location>
    <ligand>
        <name>a divalent metal cation</name>
        <dbReference type="ChEBI" id="CHEBI:60240"/>
    </ligand>
</feature>
<feature type="binding site" evidence="1">
    <location>
        <begin position="56"/>
        <end position="58"/>
    </location>
    <ligand>
        <name>4-CDP-2-C-methyl-D-erythritol 2-phosphate</name>
        <dbReference type="ChEBI" id="CHEBI:57919"/>
    </ligand>
</feature>
<feature type="binding site" evidence="1">
    <location>
        <begin position="132"/>
        <end position="135"/>
    </location>
    <ligand>
        <name>4-CDP-2-C-methyl-D-erythritol 2-phosphate</name>
        <dbReference type="ChEBI" id="CHEBI:57919"/>
    </ligand>
</feature>
<feature type="binding site" evidence="1">
    <location>
        <position position="142"/>
    </location>
    <ligand>
        <name>4-CDP-2-C-methyl-D-erythritol 2-phosphate</name>
        <dbReference type="ChEBI" id="CHEBI:57919"/>
    </ligand>
</feature>
<feature type="site" description="Transition state stabilizer" evidence="1">
    <location>
        <position position="34"/>
    </location>
</feature>
<feature type="site" description="Transition state stabilizer" evidence="1">
    <location>
        <position position="133"/>
    </location>
</feature>
<dbReference type="EC" id="4.6.1.12" evidence="1"/>
<dbReference type="EMBL" id="CP000096">
    <property type="protein sequence ID" value="ABB24452.1"/>
    <property type="molecule type" value="Genomic_DNA"/>
</dbReference>
<dbReference type="RefSeq" id="WP_011358324.1">
    <property type="nucleotide sequence ID" value="NC_007512.1"/>
</dbReference>
<dbReference type="SMR" id="Q3B2H9"/>
<dbReference type="STRING" id="319225.Plut_1598"/>
<dbReference type="KEGG" id="plt:Plut_1598"/>
<dbReference type="eggNOG" id="COG0245">
    <property type="taxonomic scope" value="Bacteria"/>
</dbReference>
<dbReference type="HOGENOM" id="CLU_084630_2_0_10"/>
<dbReference type="OrthoDB" id="9804336at2"/>
<dbReference type="UniPathway" id="UPA00056">
    <property type="reaction ID" value="UER00095"/>
</dbReference>
<dbReference type="Proteomes" id="UP000002709">
    <property type="component" value="Chromosome"/>
</dbReference>
<dbReference type="GO" id="GO:0008685">
    <property type="term" value="F:2-C-methyl-D-erythritol 2,4-cyclodiphosphate synthase activity"/>
    <property type="evidence" value="ECO:0007669"/>
    <property type="project" value="UniProtKB-UniRule"/>
</dbReference>
<dbReference type="GO" id="GO:0046872">
    <property type="term" value="F:metal ion binding"/>
    <property type="evidence" value="ECO:0007669"/>
    <property type="project" value="UniProtKB-KW"/>
</dbReference>
<dbReference type="GO" id="GO:0019288">
    <property type="term" value="P:isopentenyl diphosphate biosynthetic process, methylerythritol 4-phosphate pathway"/>
    <property type="evidence" value="ECO:0007669"/>
    <property type="project" value="UniProtKB-UniRule"/>
</dbReference>
<dbReference type="GO" id="GO:0016114">
    <property type="term" value="P:terpenoid biosynthetic process"/>
    <property type="evidence" value="ECO:0007669"/>
    <property type="project" value="InterPro"/>
</dbReference>
<dbReference type="CDD" id="cd00554">
    <property type="entry name" value="MECDP_synthase"/>
    <property type="match status" value="1"/>
</dbReference>
<dbReference type="FunFam" id="3.30.1330.50:FF:000003">
    <property type="entry name" value="2-C-methyl-D-erythritol 2,4-cyclodiphosphate synthase"/>
    <property type="match status" value="1"/>
</dbReference>
<dbReference type="Gene3D" id="3.30.1330.50">
    <property type="entry name" value="2-C-methyl-D-erythritol 2,4-cyclodiphosphate synthase"/>
    <property type="match status" value="1"/>
</dbReference>
<dbReference type="HAMAP" id="MF_00107">
    <property type="entry name" value="IspF"/>
    <property type="match status" value="1"/>
</dbReference>
<dbReference type="InterPro" id="IPR003526">
    <property type="entry name" value="MECDP_synthase"/>
</dbReference>
<dbReference type="InterPro" id="IPR020555">
    <property type="entry name" value="MECDP_synthase_CS"/>
</dbReference>
<dbReference type="InterPro" id="IPR036571">
    <property type="entry name" value="MECDP_synthase_sf"/>
</dbReference>
<dbReference type="NCBIfam" id="TIGR00151">
    <property type="entry name" value="ispF"/>
    <property type="match status" value="1"/>
</dbReference>
<dbReference type="PANTHER" id="PTHR43181">
    <property type="entry name" value="2-C-METHYL-D-ERYTHRITOL 2,4-CYCLODIPHOSPHATE SYNTHASE, CHLOROPLASTIC"/>
    <property type="match status" value="1"/>
</dbReference>
<dbReference type="PANTHER" id="PTHR43181:SF1">
    <property type="entry name" value="2-C-METHYL-D-ERYTHRITOL 2,4-CYCLODIPHOSPHATE SYNTHASE, CHLOROPLASTIC"/>
    <property type="match status" value="1"/>
</dbReference>
<dbReference type="Pfam" id="PF02542">
    <property type="entry name" value="YgbB"/>
    <property type="match status" value="1"/>
</dbReference>
<dbReference type="SUPFAM" id="SSF69765">
    <property type="entry name" value="IpsF-like"/>
    <property type="match status" value="1"/>
</dbReference>
<dbReference type="PROSITE" id="PS01350">
    <property type="entry name" value="ISPF"/>
    <property type="match status" value="1"/>
</dbReference>
<organism>
    <name type="scientific">Chlorobium luteolum (strain DSM 273 / BCRC 81028 / 2530)</name>
    <name type="common">Pelodictyon luteolum</name>
    <dbReference type="NCBI Taxonomy" id="319225"/>
    <lineage>
        <taxon>Bacteria</taxon>
        <taxon>Pseudomonadati</taxon>
        <taxon>Chlorobiota</taxon>
        <taxon>Chlorobiia</taxon>
        <taxon>Chlorobiales</taxon>
        <taxon>Chlorobiaceae</taxon>
        <taxon>Chlorobium/Pelodictyon group</taxon>
        <taxon>Pelodictyon</taxon>
    </lineage>
</organism>
<proteinExistence type="inferred from homology"/>